<comment type="function">
    <text evidence="1">IF-3 binds to the 30S ribosomal subunit and shifts the equilibrium between 70S ribosomes and their 50S and 30S subunits in favor of the free subunits, thus enhancing the availability of 30S subunits on which protein synthesis initiation begins.</text>
</comment>
<comment type="subunit">
    <text evidence="1">Monomer.</text>
</comment>
<comment type="subcellular location">
    <subcellularLocation>
        <location evidence="1">Cytoplasm</location>
    </subcellularLocation>
</comment>
<comment type="similarity">
    <text evidence="1">Belongs to the IF-3 family.</text>
</comment>
<comment type="sequence caution" evidence="2">
    <conflict type="erroneous initiation">
        <sequence resource="EMBL-CDS" id="AAO55890"/>
    </conflict>
</comment>
<feature type="chain" id="PRO_0000177560" description="Translation initiation factor IF-3">
    <location>
        <begin position="1"/>
        <end position="183"/>
    </location>
</feature>
<name>IF3_PSESM</name>
<dbReference type="EMBL" id="AE016853">
    <property type="protein sequence ID" value="AAO55890.1"/>
    <property type="status" value="ALT_INIT"/>
    <property type="molecule type" value="Genomic_DNA"/>
</dbReference>
<dbReference type="RefSeq" id="NP_792195.1">
    <property type="nucleotide sequence ID" value="NC_004578.1"/>
</dbReference>
<dbReference type="SMR" id="P0A132"/>
<dbReference type="STRING" id="223283.PSPTO_2379"/>
<dbReference type="KEGG" id="pst:PSPTO_2379"/>
<dbReference type="PATRIC" id="fig|223283.9.peg.2414"/>
<dbReference type="eggNOG" id="COG0290">
    <property type="taxonomic scope" value="Bacteria"/>
</dbReference>
<dbReference type="HOGENOM" id="CLU_054919_3_2_6"/>
<dbReference type="OrthoDB" id="9806014at2"/>
<dbReference type="Proteomes" id="UP000002515">
    <property type="component" value="Chromosome"/>
</dbReference>
<dbReference type="GO" id="GO:0005829">
    <property type="term" value="C:cytosol"/>
    <property type="evidence" value="ECO:0007669"/>
    <property type="project" value="TreeGrafter"/>
</dbReference>
<dbReference type="GO" id="GO:0016020">
    <property type="term" value="C:membrane"/>
    <property type="evidence" value="ECO:0007669"/>
    <property type="project" value="TreeGrafter"/>
</dbReference>
<dbReference type="GO" id="GO:0043022">
    <property type="term" value="F:ribosome binding"/>
    <property type="evidence" value="ECO:0007669"/>
    <property type="project" value="TreeGrafter"/>
</dbReference>
<dbReference type="GO" id="GO:0003743">
    <property type="term" value="F:translation initiation factor activity"/>
    <property type="evidence" value="ECO:0007669"/>
    <property type="project" value="UniProtKB-UniRule"/>
</dbReference>
<dbReference type="GO" id="GO:0032790">
    <property type="term" value="P:ribosome disassembly"/>
    <property type="evidence" value="ECO:0007669"/>
    <property type="project" value="TreeGrafter"/>
</dbReference>
<dbReference type="FunFam" id="3.10.20.80:FF:000001">
    <property type="entry name" value="Translation initiation factor IF-3"/>
    <property type="match status" value="1"/>
</dbReference>
<dbReference type="FunFam" id="3.30.110.10:FF:000001">
    <property type="entry name" value="Translation initiation factor IF-3"/>
    <property type="match status" value="1"/>
</dbReference>
<dbReference type="Gene3D" id="3.30.110.10">
    <property type="entry name" value="Translation initiation factor 3 (IF-3), C-terminal domain"/>
    <property type="match status" value="1"/>
</dbReference>
<dbReference type="Gene3D" id="3.10.20.80">
    <property type="entry name" value="Translation initiation factor 3 (IF-3), N-terminal domain"/>
    <property type="match status" value="1"/>
</dbReference>
<dbReference type="HAMAP" id="MF_00080">
    <property type="entry name" value="IF_3"/>
    <property type="match status" value="1"/>
</dbReference>
<dbReference type="InterPro" id="IPR036788">
    <property type="entry name" value="T_IF-3_C_sf"/>
</dbReference>
<dbReference type="InterPro" id="IPR036787">
    <property type="entry name" value="T_IF-3_N_sf"/>
</dbReference>
<dbReference type="InterPro" id="IPR019813">
    <property type="entry name" value="Translation_initiation_fac3_CS"/>
</dbReference>
<dbReference type="InterPro" id="IPR001288">
    <property type="entry name" value="Translation_initiation_fac_3"/>
</dbReference>
<dbReference type="InterPro" id="IPR019815">
    <property type="entry name" value="Translation_initiation_fac_3_C"/>
</dbReference>
<dbReference type="InterPro" id="IPR019814">
    <property type="entry name" value="Translation_initiation_fac_3_N"/>
</dbReference>
<dbReference type="NCBIfam" id="TIGR00168">
    <property type="entry name" value="infC"/>
    <property type="match status" value="1"/>
</dbReference>
<dbReference type="PANTHER" id="PTHR10938">
    <property type="entry name" value="TRANSLATION INITIATION FACTOR IF-3"/>
    <property type="match status" value="1"/>
</dbReference>
<dbReference type="PANTHER" id="PTHR10938:SF0">
    <property type="entry name" value="TRANSLATION INITIATION FACTOR IF-3, MITOCHONDRIAL"/>
    <property type="match status" value="1"/>
</dbReference>
<dbReference type="Pfam" id="PF00707">
    <property type="entry name" value="IF3_C"/>
    <property type="match status" value="1"/>
</dbReference>
<dbReference type="Pfam" id="PF05198">
    <property type="entry name" value="IF3_N"/>
    <property type="match status" value="1"/>
</dbReference>
<dbReference type="SUPFAM" id="SSF55200">
    <property type="entry name" value="Translation initiation factor IF3, C-terminal domain"/>
    <property type="match status" value="1"/>
</dbReference>
<dbReference type="SUPFAM" id="SSF54364">
    <property type="entry name" value="Translation initiation factor IF3, N-terminal domain"/>
    <property type="match status" value="1"/>
</dbReference>
<dbReference type="PROSITE" id="PS00938">
    <property type="entry name" value="IF3"/>
    <property type="match status" value="1"/>
</dbReference>
<organism>
    <name type="scientific">Pseudomonas syringae pv. tomato (strain ATCC BAA-871 / DC3000)</name>
    <dbReference type="NCBI Taxonomy" id="223283"/>
    <lineage>
        <taxon>Bacteria</taxon>
        <taxon>Pseudomonadati</taxon>
        <taxon>Pseudomonadota</taxon>
        <taxon>Gammaproteobacteria</taxon>
        <taxon>Pseudomonadales</taxon>
        <taxon>Pseudomonadaceae</taxon>
        <taxon>Pseudomonas</taxon>
    </lineage>
</organism>
<proteinExistence type="inferred from homology"/>
<protein>
    <recommendedName>
        <fullName evidence="1">Translation initiation factor IF-3</fullName>
    </recommendedName>
</protein>
<accession>P0A132</accession>
<accession>P52834</accession>
<keyword id="KW-0963">Cytoplasm</keyword>
<keyword id="KW-0396">Initiation factor</keyword>
<keyword id="KW-0648">Protein biosynthesis</keyword>
<keyword id="KW-1185">Reference proteome</keyword>
<reference key="1">
    <citation type="journal article" date="2003" name="Proc. Natl. Acad. Sci. U.S.A.">
        <title>The complete genome sequence of the Arabidopsis and tomato pathogen Pseudomonas syringae pv. tomato DC3000.</title>
        <authorList>
            <person name="Buell C.R."/>
            <person name="Joardar V."/>
            <person name="Lindeberg M."/>
            <person name="Selengut J."/>
            <person name="Paulsen I.T."/>
            <person name="Gwinn M.L."/>
            <person name="Dodson R.J."/>
            <person name="DeBoy R.T."/>
            <person name="Durkin A.S."/>
            <person name="Kolonay J.F."/>
            <person name="Madupu R."/>
            <person name="Daugherty S.C."/>
            <person name="Brinkac L.M."/>
            <person name="Beanan M.J."/>
            <person name="Haft D.H."/>
            <person name="Nelson W.C."/>
            <person name="Davidsen T.M."/>
            <person name="Zafar N."/>
            <person name="Zhou L."/>
            <person name="Liu J."/>
            <person name="Yuan Q."/>
            <person name="Khouri H.M."/>
            <person name="Fedorova N.B."/>
            <person name="Tran B."/>
            <person name="Russell D."/>
            <person name="Berry K.J."/>
            <person name="Utterback T.R."/>
            <person name="Van Aken S.E."/>
            <person name="Feldblyum T.V."/>
            <person name="D'Ascenzo M."/>
            <person name="Deng W.-L."/>
            <person name="Ramos A.R."/>
            <person name="Alfano J.R."/>
            <person name="Cartinhour S."/>
            <person name="Chatterjee A.K."/>
            <person name="Delaney T.P."/>
            <person name="Lazarowitz S.G."/>
            <person name="Martin G.B."/>
            <person name="Schneider D.J."/>
            <person name="Tang X."/>
            <person name="Bender C.L."/>
            <person name="White O."/>
            <person name="Fraser C.M."/>
            <person name="Collmer A."/>
        </authorList>
    </citation>
    <scope>NUCLEOTIDE SEQUENCE [LARGE SCALE GENOMIC DNA]</scope>
    <source>
        <strain>ATCC BAA-871 / DC3000</strain>
    </source>
</reference>
<sequence>MIIKREMRQDKRAAPKAPINENISAREVRLIGADGEQIGIVSIDEALRIAEEAKLDLVEISADAVPPVCRVMDYGKSIFEKKKQVAAAKKNQKQIQVKEIKFRPGTEEGDYQVKLRNLVRFLSDGDRAKVSLRFRGREMAHQELGMELLKRVEGDLLEYGSVEQHPKMEGRQLIMVIAPKKKK</sequence>
<evidence type="ECO:0000255" key="1">
    <source>
        <dbReference type="HAMAP-Rule" id="MF_00080"/>
    </source>
</evidence>
<evidence type="ECO:0000305" key="2"/>
<gene>
    <name evidence="1" type="primary">infC</name>
    <name type="ordered locus">PSPTO_2379</name>
</gene>